<accession>P77616</accession>
<sequence>MRYLNTKNIIAAGVLLSCMSSIAWGAIIPDRTRIIMNESDKGEALKLTNQSKNLPYLAQTWIEDTKGNKSRDFIVTVPPMVRLNPSEQIQIRMITQEKIAQLPKDRETLFYFNVREIPPKTDKKNVMQVTMQHALKLFWRPKAIELEDDGVMTYEKVEIIRRNDGSIRFNNKMPYHVTLGYIGTNGVTMLPQTQSLMVTPFSYANTQFKNVPSTFQVGYINDFGGLSFYEINCPVVNNICNISVANRDQ</sequence>
<name>YQIH_ECOLI</name>
<proteinExistence type="inferred from homology"/>
<organism>
    <name type="scientific">Escherichia coli (strain K12)</name>
    <dbReference type="NCBI Taxonomy" id="83333"/>
    <lineage>
        <taxon>Bacteria</taxon>
        <taxon>Pseudomonadati</taxon>
        <taxon>Pseudomonadota</taxon>
        <taxon>Gammaproteobacteria</taxon>
        <taxon>Enterobacterales</taxon>
        <taxon>Enterobacteriaceae</taxon>
        <taxon>Escherichia</taxon>
    </lineage>
</organism>
<gene>
    <name type="primary">yqiH</name>
    <name type="ordered locus">b3047</name>
    <name type="ordered locus">JW5508</name>
</gene>
<reference key="1">
    <citation type="journal article" date="1997" name="DNA Res.">
        <title>Construction of a contiguous 874-kb sequence of the Escherichia coli-K12 genome corresponding to 50.0-68.8 min on the linkage map and analysis of its sequence features.</title>
        <authorList>
            <person name="Yamamoto Y."/>
            <person name="Aiba H."/>
            <person name="Baba T."/>
            <person name="Hayashi K."/>
            <person name="Inada T."/>
            <person name="Isono K."/>
            <person name="Itoh T."/>
            <person name="Kimura S."/>
            <person name="Kitagawa M."/>
            <person name="Makino K."/>
            <person name="Miki T."/>
            <person name="Mitsuhashi N."/>
            <person name="Mizobuchi K."/>
            <person name="Mori H."/>
            <person name="Nakade S."/>
            <person name="Nakamura Y."/>
            <person name="Nashimoto H."/>
            <person name="Oshima T."/>
            <person name="Oyama S."/>
            <person name="Saito N."/>
            <person name="Sampei G."/>
            <person name="Satoh Y."/>
            <person name="Sivasundaram S."/>
            <person name="Tagami H."/>
            <person name="Takahashi H."/>
            <person name="Takeda J."/>
            <person name="Takemoto K."/>
            <person name="Uehara K."/>
            <person name="Wada C."/>
            <person name="Yamagata S."/>
            <person name="Horiuchi T."/>
        </authorList>
    </citation>
    <scope>NUCLEOTIDE SEQUENCE [LARGE SCALE GENOMIC DNA]</scope>
    <source>
        <strain>K12 / W3110 / ATCC 27325 / DSM 5911</strain>
    </source>
</reference>
<reference key="2">
    <citation type="journal article" date="1997" name="Science">
        <title>The complete genome sequence of Escherichia coli K-12.</title>
        <authorList>
            <person name="Blattner F.R."/>
            <person name="Plunkett G. III"/>
            <person name="Bloch C.A."/>
            <person name="Perna N.T."/>
            <person name="Burland V."/>
            <person name="Riley M."/>
            <person name="Collado-Vides J."/>
            <person name="Glasner J.D."/>
            <person name="Rode C.K."/>
            <person name="Mayhew G.F."/>
            <person name="Gregor J."/>
            <person name="Davis N.W."/>
            <person name="Kirkpatrick H.A."/>
            <person name="Goeden M.A."/>
            <person name="Rose D.J."/>
            <person name="Mau B."/>
            <person name="Shao Y."/>
        </authorList>
    </citation>
    <scope>NUCLEOTIDE SEQUENCE [LARGE SCALE GENOMIC DNA]</scope>
    <source>
        <strain>K12 / MG1655 / ATCC 47076</strain>
    </source>
</reference>
<reference key="3">
    <citation type="journal article" date="2006" name="Mol. Syst. Biol.">
        <title>Highly accurate genome sequences of Escherichia coli K-12 strains MG1655 and W3110.</title>
        <authorList>
            <person name="Hayashi K."/>
            <person name="Morooka N."/>
            <person name="Yamamoto Y."/>
            <person name="Fujita K."/>
            <person name="Isono K."/>
            <person name="Choi S."/>
            <person name="Ohtsubo E."/>
            <person name="Baba T."/>
            <person name="Wanner B.L."/>
            <person name="Mori H."/>
            <person name="Horiuchi T."/>
        </authorList>
    </citation>
    <scope>NUCLEOTIDE SEQUENCE [LARGE SCALE GENOMIC DNA]</scope>
    <source>
        <strain>K12 / W3110 / ATCC 27325 / DSM 5911</strain>
    </source>
</reference>
<comment type="function">
    <text evidence="1">Could be required for the biogenesis of a putative fimbria.</text>
</comment>
<comment type="subcellular location">
    <subcellularLocation>
        <location evidence="1">Periplasm</location>
    </subcellularLocation>
</comment>
<comment type="similarity">
    <text evidence="3">Belongs to the periplasmic pilus chaperone family.</text>
</comment>
<evidence type="ECO:0000250" key="1"/>
<evidence type="ECO:0000255" key="2">
    <source>
        <dbReference type="PROSITE-ProRule" id="PRU00303"/>
    </source>
</evidence>
<evidence type="ECO:0000305" key="3"/>
<keyword id="KW-0143">Chaperone</keyword>
<keyword id="KW-1029">Fimbrium biogenesis</keyword>
<keyword id="KW-0393">Immunoglobulin domain</keyword>
<keyword id="KW-0574">Periplasm</keyword>
<keyword id="KW-1185">Reference proteome</keyword>
<keyword id="KW-0732">Signal</keyword>
<feature type="signal peptide" evidence="2">
    <location>
        <begin position="1"/>
        <end position="25"/>
    </location>
</feature>
<feature type="chain" id="PRO_0000009296" description="Uncharacterized fimbrial chaperone YqiH">
    <location>
        <begin position="26"/>
        <end position="249"/>
    </location>
</feature>
<dbReference type="EMBL" id="U00096">
    <property type="protein sequence ID" value="AAC76083.2"/>
    <property type="molecule type" value="Genomic_DNA"/>
</dbReference>
<dbReference type="EMBL" id="AP009048">
    <property type="protein sequence ID" value="BAA16576.2"/>
    <property type="molecule type" value="Genomic_DNA"/>
</dbReference>
<dbReference type="PIR" id="E65092">
    <property type="entry name" value="E65092"/>
</dbReference>
<dbReference type="RefSeq" id="NP_417519.4">
    <property type="nucleotide sequence ID" value="NC_000913.3"/>
</dbReference>
<dbReference type="RefSeq" id="WP_001269824.1">
    <property type="nucleotide sequence ID" value="NZ_SSZK01000023.1"/>
</dbReference>
<dbReference type="SMR" id="P77616"/>
<dbReference type="BioGRID" id="4262384">
    <property type="interactions" value="208"/>
</dbReference>
<dbReference type="FunCoup" id="P77616">
    <property type="interactions" value="63"/>
</dbReference>
<dbReference type="STRING" id="511145.b3047"/>
<dbReference type="PaxDb" id="511145-b3047"/>
<dbReference type="EnsemblBacteria" id="AAC76083">
    <property type="protein sequence ID" value="AAC76083"/>
    <property type="gene ID" value="b3047"/>
</dbReference>
<dbReference type="GeneID" id="947531"/>
<dbReference type="KEGG" id="ecj:JW5508"/>
<dbReference type="KEGG" id="eco:b3047"/>
<dbReference type="KEGG" id="ecoc:C3026_16640"/>
<dbReference type="PATRIC" id="fig|1411691.4.peg.3684"/>
<dbReference type="EchoBASE" id="EB3980"/>
<dbReference type="eggNOG" id="COG3121">
    <property type="taxonomic scope" value="Bacteria"/>
</dbReference>
<dbReference type="HOGENOM" id="CLU_070768_5_1_6"/>
<dbReference type="InParanoid" id="P77616"/>
<dbReference type="OMA" id="NSIAWGA"/>
<dbReference type="OrthoDB" id="9131059at2"/>
<dbReference type="PhylomeDB" id="P77616"/>
<dbReference type="BioCyc" id="EcoCyc:G7586-MONOMER"/>
<dbReference type="PRO" id="PR:P77616"/>
<dbReference type="Proteomes" id="UP000000625">
    <property type="component" value="Chromosome"/>
</dbReference>
<dbReference type="GO" id="GO:0030288">
    <property type="term" value="C:outer membrane-bounded periplasmic space"/>
    <property type="evidence" value="ECO:0000318"/>
    <property type="project" value="GO_Central"/>
</dbReference>
<dbReference type="GO" id="GO:0044183">
    <property type="term" value="F:protein folding chaperone"/>
    <property type="evidence" value="ECO:0000318"/>
    <property type="project" value="GO_Central"/>
</dbReference>
<dbReference type="GO" id="GO:0071555">
    <property type="term" value="P:cell wall organization"/>
    <property type="evidence" value="ECO:0007669"/>
    <property type="project" value="InterPro"/>
</dbReference>
<dbReference type="GO" id="GO:0061077">
    <property type="term" value="P:chaperone-mediated protein folding"/>
    <property type="evidence" value="ECO:0000318"/>
    <property type="project" value="GO_Central"/>
</dbReference>
<dbReference type="GO" id="GO:0006974">
    <property type="term" value="P:DNA damage response"/>
    <property type="evidence" value="ECO:0000270"/>
    <property type="project" value="EcoliWiki"/>
</dbReference>
<dbReference type="FunFam" id="2.60.40.10:FF:000458">
    <property type="entry name" value="Molecular chaperone FimC"/>
    <property type="match status" value="1"/>
</dbReference>
<dbReference type="Gene3D" id="2.60.40.10">
    <property type="entry name" value="Immunoglobulins"/>
    <property type="match status" value="2"/>
</dbReference>
<dbReference type="InterPro" id="IPR013783">
    <property type="entry name" value="Ig-like_fold"/>
</dbReference>
<dbReference type="InterPro" id="IPR008962">
    <property type="entry name" value="PapD-like_sf"/>
</dbReference>
<dbReference type="InterPro" id="IPR050643">
    <property type="entry name" value="Periplasmic_pilus_chap"/>
</dbReference>
<dbReference type="InterPro" id="IPR036316">
    <property type="entry name" value="Pili_assmbl_chap_C_dom_sf"/>
</dbReference>
<dbReference type="InterPro" id="IPR001829">
    <property type="entry name" value="Pili_assmbl_chaperone_bac"/>
</dbReference>
<dbReference type="InterPro" id="IPR016148">
    <property type="entry name" value="Pili_assmbl_chaperone_C"/>
</dbReference>
<dbReference type="InterPro" id="IPR018046">
    <property type="entry name" value="Pili_assmbl_chaperone_CS"/>
</dbReference>
<dbReference type="InterPro" id="IPR016147">
    <property type="entry name" value="Pili_assmbl_chaperone_N"/>
</dbReference>
<dbReference type="PANTHER" id="PTHR30251:SF5">
    <property type="entry name" value="FIMBRIAL CHAPARONE PROTEIN"/>
    <property type="match status" value="1"/>
</dbReference>
<dbReference type="PANTHER" id="PTHR30251">
    <property type="entry name" value="PILUS ASSEMBLY CHAPERONE"/>
    <property type="match status" value="1"/>
</dbReference>
<dbReference type="Pfam" id="PF02753">
    <property type="entry name" value="PapD_C"/>
    <property type="match status" value="1"/>
</dbReference>
<dbReference type="Pfam" id="PF00345">
    <property type="entry name" value="PapD_N"/>
    <property type="match status" value="1"/>
</dbReference>
<dbReference type="PRINTS" id="PR00969">
    <property type="entry name" value="CHAPERONPILI"/>
</dbReference>
<dbReference type="SUPFAM" id="SSF49354">
    <property type="entry name" value="PapD-like"/>
    <property type="match status" value="1"/>
</dbReference>
<dbReference type="SUPFAM" id="SSF49584">
    <property type="entry name" value="Periplasmic chaperone C-domain"/>
    <property type="match status" value="1"/>
</dbReference>
<dbReference type="PROSITE" id="PS00635">
    <property type="entry name" value="PILI_CHAPERONE"/>
    <property type="match status" value="1"/>
</dbReference>
<dbReference type="PROSITE" id="PS51257">
    <property type="entry name" value="PROKAR_LIPOPROTEIN"/>
    <property type="match status" value="1"/>
</dbReference>
<protein>
    <recommendedName>
        <fullName>Uncharacterized fimbrial chaperone YqiH</fullName>
    </recommendedName>
</protein>